<protein>
    <recommendedName>
        <fullName evidence="1">Coenzyme PQQ synthesis protein B</fullName>
    </recommendedName>
    <alternativeName>
        <fullName evidence="1">Pyrroloquinoline quinone biosynthesis protein B</fullName>
    </alternativeName>
</protein>
<proteinExistence type="inferred from homology"/>
<reference key="1">
    <citation type="submission" date="2000-10" db="EMBL/GenBank/DDBJ databases">
        <title>Mineral phosphate solubilization in Sinorhizobium meliloti.</title>
        <authorList>
            <person name="Finan T.M."/>
            <person name="Aneja P."/>
            <person name="Chain P."/>
            <person name="Napper K."/>
            <person name="Golding B."/>
        </authorList>
    </citation>
    <scope>NUCLEOTIDE SEQUENCE [GENOMIC DNA]</scope>
    <source>
        <strain>1021</strain>
    </source>
</reference>
<reference key="2">
    <citation type="journal article" date="2001" name="Proc. Natl. Acad. Sci. U.S.A.">
        <title>The complete sequence of the 1,683-kb pSymB megaplasmid from the N2-fixing endosymbiont Sinorhizobium meliloti.</title>
        <authorList>
            <person name="Finan T.M."/>
            <person name="Weidner S."/>
            <person name="Wong K."/>
            <person name="Buhrmester J."/>
            <person name="Chain P."/>
            <person name="Vorhoelter F.J."/>
            <person name="Hernandez-Lucas I."/>
            <person name="Becker A."/>
            <person name="Cowie A."/>
            <person name="Gouzy J."/>
            <person name="Golding B."/>
            <person name="Puehler A."/>
        </authorList>
    </citation>
    <scope>NUCLEOTIDE SEQUENCE [LARGE SCALE GENOMIC DNA]</scope>
    <source>
        <strain>1021</strain>
    </source>
</reference>
<reference key="3">
    <citation type="journal article" date="2001" name="Science">
        <title>The composite genome of the legume symbiont Sinorhizobium meliloti.</title>
        <authorList>
            <person name="Galibert F."/>
            <person name="Finan T.M."/>
            <person name="Long S.R."/>
            <person name="Puehler A."/>
            <person name="Abola P."/>
            <person name="Ampe F."/>
            <person name="Barloy-Hubler F."/>
            <person name="Barnett M.J."/>
            <person name="Becker A."/>
            <person name="Boistard P."/>
            <person name="Bothe G."/>
            <person name="Boutry M."/>
            <person name="Bowser L."/>
            <person name="Buhrmester J."/>
            <person name="Cadieu E."/>
            <person name="Capela D."/>
            <person name="Chain P."/>
            <person name="Cowie A."/>
            <person name="Davis R.W."/>
            <person name="Dreano S."/>
            <person name="Federspiel N.A."/>
            <person name="Fisher R.F."/>
            <person name="Gloux S."/>
            <person name="Godrie T."/>
            <person name="Goffeau A."/>
            <person name="Golding B."/>
            <person name="Gouzy J."/>
            <person name="Gurjal M."/>
            <person name="Hernandez-Lucas I."/>
            <person name="Hong A."/>
            <person name="Huizar L."/>
            <person name="Hyman R.W."/>
            <person name="Jones T."/>
            <person name="Kahn D."/>
            <person name="Kahn M.L."/>
            <person name="Kalman S."/>
            <person name="Keating D.H."/>
            <person name="Kiss E."/>
            <person name="Komp C."/>
            <person name="Lelaure V."/>
            <person name="Masuy D."/>
            <person name="Palm C."/>
            <person name="Peck M.C."/>
            <person name="Pohl T.M."/>
            <person name="Portetelle D."/>
            <person name="Purnelle B."/>
            <person name="Ramsperger U."/>
            <person name="Surzycki R."/>
            <person name="Thebault P."/>
            <person name="Vandenbol M."/>
            <person name="Vorhoelter F.J."/>
            <person name="Weidner S."/>
            <person name="Wells D.H."/>
            <person name="Wong K."/>
            <person name="Yeh K.-C."/>
            <person name="Batut J."/>
        </authorList>
    </citation>
    <scope>NUCLEOTIDE SEQUENCE [LARGE SCALE GENOMIC DNA]</scope>
    <source>
        <strain>1021</strain>
    </source>
</reference>
<organism>
    <name type="scientific">Rhizobium meliloti (strain 1021)</name>
    <name type="common">Ensifer meliloti</name>
    <name type="synonym">Sinorhizobium meliloti</name>
    <dbReference type="NCBI Taxonomy" id="266834"/>
    <lineage>
        <taxon>Bacteria</taxon>
        <taxon>Pseudomonadati</taxon>
        <taxon>Pseudomonadota</taxon>
        <taxon>Alphaproteobacteria</taxon>
        <taxon>Hyphomicrobiales</taxon>
        <taxon>Rhizobiaceae</taxon>
        <taxon>Sinorhizobium/Ensifer group</taxon>
        <taxon>Sinorhizobium</taxon>
    </lineage>
</organism>
<geneLocation type="plasmid">
    <name>pSymB</name>
    <name>megaplasmid 2</name>
</geneLocation>
<keyword id="KW-0614">Plasmid</keyword>
<keyword id="KW-0884">PQQ biosynthesis</keyword>
<keyword id="KW-1185">Reference proteome</keyword>
<keyword id="KW-0813">Transport</keyword>
<gene>
    <name evidence="1" type="primary">pqqB</name>
    <name type="ordered locus">RB0198</name>
    <name type="ORF">SMb20205</name>
</gene>
<dbReference type="EMBL" id="AY013584">
    <property type="protein sequence ID" value="AAG42539.1"/>
    <property type="molecule type" value="Genomic_DNA"/>
</dbReference>
<dbReference type="EMBL" id="AL591985">
    <property type="protein sequence ID" value="CAC48598.1"/>
    <property type="molecule type" value="Genomic_DNA"/>
</dbReference>
<dbReference type="PIR" id="F95866">
    <property type="entry name" value="F95866"/>
</dbReference>
<dbReference type="RefSeq" id="NP_436738.1">
    <property type="nucleotide sequence ID" value="NC_003078.1"/>
</dbReference>
<dbReference type="RefSeq" id="WP_010975103.1">
    <property type="nucleotide sequence ID" value="NC_003078.1"/>
</dbReference>
<dbReference type="SMR" id="Q9EXV1"/>
<dbReference type="EnsemblBacteria" id="CAC48598">
    <property type="protein sequence ID" value="CAC48598"/>
    <property type="gene ID" value="SM_b20205"/>
</dbReference>
<dbReference type="KEGG" id="sme:SM_b20205"/>
<dbReference type="PATRIC" id="fig|266834.11.peg.5114"/>
<dbReference type="eggNOG" id="COG1235">
    <property type="taxonomic scope" value="Bacteria"/>
</dbReference>
<dbReference type="HOGENOM" id="CLU_061120_0_0_5"/>
<dbReference type="OrthoDB" id="9778305at2"/>
<dbReference type="UniPathway" id="UPA00539"/>
<dbReference type="Proteomes" id="UP000001976">
    <property type="component" value="Plasmid pSymB"/>
</dbReference>
<dbReference type="GO" id="GO:0018189">
    <property type="term" value="P:pyrroloquinoline quinone biosynthetic process"/>
    <property type="evidence" value="ECO:0007669"/>
    <property type="project" value="UniProtKB-UniRule"/>
</dbReference>
<dbReference type="Gene3D" id="3.60.15.10">
    <property type="entry name" value="Ribonuclease Z/Hydroxyacylglutathione hydrolase-like"/>
    <property type="match status" value="1"/>
</dbReference>
<dbReference type="HAMAP" id="MF_00653">
    <property type="entry name" value="PQQ_syn_PqqB"/>
    <property type="match status" value="1"/>
</dbReference>
<dbReference type="InterPro" id="IPR001279">
    <property type="entry name" value="Metallo-B-lactamas"/>
</dbReference>
<dbReference type="InterPro" id="IPR011842">
    <property type="entry name" value="PQQ_synth_PqqB"/>
</dbReference>
<dbReference type="InterPro" id="IPR036866">
    <property type="entry name" value="RibonucZ/Hydroxyglut_hydro"/>
</dbReference>
<dbReference type="NCBIfam" id="TIGR02108">
    <property type="entry name" value="PQQ_syn_pqqB"/>
    <property type="match status" value="1"/>
</dbReference>
<dbReference type="PANTHER" id="PTHR42663:SF7">
    <property type="entry name" value="COENZYME PQQ SYNTHESIS PROTEIN B"/>
    <property type="match status" value="1"/>
</dbReference>
<dbReference type="PANTHER" id="PTHR42663">
    <property type="entry name" value="HYDROLASE C777.06C-RELATED-RELATED"/>
    <property type="match status" value="1"/>
</dbReference>
<dbReference type="Pfam" id="PF12706">
    <property type="entry name" value="Lactamase_B_2"/>
    <property type="match status" value="1"/>
</dbReference>
<dbReference type="SUPFAM" id="SSF56281">
    <property type="entry name" value="Metallo-hydrolase/oxidoreductase"/>
    <property type="match status" value="1"/>
</dbReference>
<feature type="chain" id="PRO_0000220008" description="Coenzyme PQQ synthesis protein B">
    <location>
        <begin position="1"/>
        <end position="303"/>
    </location>
</feature>
<sequence length="303" mass="33106">MNKTSDLRIIVLGAAAGGGLPQWNCGCRNCAMARDPASGLRPQTQSSLAVSLDGESWTVFNASPDIRQQVQDNCPLQPRRLRHSPIESVVLTNGDIDHLAGLLVLREKQAFTLFSTGAVGRIVSDNPVFQVLDPELVSRKTIEIDEAFSPLSGLDARLFAVPGKVPLFLEDGEPDLGIEGEHTVGLELEATGRRVYYVPGCAMMTDSLAARLRDADAVFFDGTLFSDDEMILTGTGRKTGRRMGHMPIDGEGGSLDALDLLNIRRKIYVHINNTNPIWRAGSERERVEARGFEIGYDGMEVRL</sequence>
<name>PQQB_RHIME</name>
<accession>Q9EXV1</accession>
<evidence type="ECO:0000255" key="1">
    <source>
        <dbReference type="HAMAP-Rule" id="MF_00653"/>
    </source>
</evidence>
<comment type="function">
    <text evidence="1">May be involved in the transport of PQQ or its precursor to the periplasm.</text>
</comment>
<comment type="pathway">
    <text evidence="1">Cofactor biosynthesis; pyrroloquinoline quinone biosynthesis.</text>
</comment>
<comment type="similarity">
    <text evidence="1">Belongs to the PqqB family.</text>
</comment>